<dbReference type="EC" id="2.3.1.74"/>
<dbReference type="EMBL" id="U15946">
    <property type="protein sequence ID" value="AAB02620.1"/>
    <property type="molecule type" value="Genomic_DNA"/>
</dbReference>
<dbReference type="EMBL" id="U84905">
    <property type="protein sequence ID" value="AAB62582.1"/>
    <property type="molecule type" value="Genomic_DNA"/>
</dbReference>
<dbReference type="EMBL" id="U84907">
    <property type="protein sequence ID" value="AAB62584.1"/>
    <property type="molecule type" value="Genomic_DNA"/>
</dbReference>
<dbReference type="EMBL" id="U84908">
    <property type="protein sequence ID" value="AAB62585.1"/>
    <property type="molecule type" value="Genomic_DNA"/>
</dbReference>
<dbReference type="EMBL" id="U84909">
    <property type="protein sequence ID" value="AAB62586.1"/>
    <property type="molecule type" value="Genomic_DNA"/>
</dbReference>
<dbReference type="PIR" id="T10958">
    <property type="entry name" value="T10958"/>
</dbReference>
<dbReference type="SMR" id="P48397"/>
<dbReference type="UniPathway" id="UPA00154"/>
<dbReference type="GO" id="GO:0016210">
    <property type="term" value="F:naringenin-chalcone synthase activity"/>
    <property type="evidence" value="ECO:0007669"/>
    <property type="project" value="UniProtKB-EC"/>
</dbReference>
<dbReference type="GO" id="GO:0009813">
    <property type="term" value="P:flavonoid biosynthetic process"/>
    <property type="evidence" value="ECO:0007669"/>
    <property type="project" value="UniProtKB-UniPathway"/>
</dbReference>
<dbReference type="GO" id="GO:0030639">
    <property type="term" value="P:polyketide biosynthetic process"/>
    <property type="evidence" value="ECO:0007669"/>
    <property type="project" value="TreeGrafter"/>
</dbReference>
<dbReference type="CDD" id="cd00831">
    <property type="entry name" value="CHS_like"/>
    <property type="match status" value="1"/>
</dbReference>
<dbReference type="FunFam" id="3.40.47.10:FF:000014">
    <property type="entry name" value="Chalcone synthase 1"/>
    <property type="match status" value="1"/>
</dbReference>
<dbReference type="FunFam" id="3.40.47.10:FF:000025">
    <property type="entry name" value="Chalcone synthase 2"/>
    <property type="match status" value="1"/>
</dbReference>
<dbReference type="Gene3D" id="3.40.47.10">
    <property type="match status" value="2"/>
</dbReference>
<dbReference type="InterPro" id="IPR012328">
    <property type="entry name" value="Chalcone/stilbene_synt_C"/>
</dbReference>
<dbReference type="InterPro" id="IPR001099">
    <property type="entry name" value="Chalcone/stilbene_synt_N"/>
</dbReference>
<dbReference type="InterPro" id="IPR018088">
    <property type="entry name" value="Chalcone/stilbene_synthase_AS"/>
</dbReference>
<dbReference type="InterPro" id="IPR011141">
    <property type="entry name" value="Polyketide_synthase_type-III"/>
</dbReference>
<dbReference type="InterPro" id="IPR016039">
    <property type="entry name" value="Thiolase-like"/>
</dbReference>
<dbReference type="PANTHER" id="PTHR11877:SF104">
    <property type="entry name" value="CHALCONE SYNTHASE"/>
    <property type="match status" value="1"/>
</dbReference>
<dbReference type="PANTHER" id="PTHR11877">
    <property type="entry name" value="HYDROXYMETHYLGLUTARYL-COA SYNTHASE"/>
    <property type="match status" value="1"/>
</dbReference>
<dbReference type="Pfam" id="PF02797">
    <property type="entry name" value="Chal_sti_synt_C"/>
    <property type="match status" value="1"/>
</dbReference>
<dbReference type="Pfam" id="PF00195">
    <property type="entry name" value="Chal_sti_synt_N"/>
    <property type="match status" value="1"/>
</dbReference>
<dbReference type="PIRSF" id="PIRSF000451">
    <property type="entry name" value="PKS_III"/>
    <property type="match status" value="1"/>
</dbReference>
<dbReference type="SUPFAM" id="SSF53901">
    <property type="entry name" value="Thiolase-like"/>
    <property type="match status" value="2"/>
</dbReference>
<dbReference type="PROSITE" id="PS00441">
    <property type="entry name" value="CHALCONE_SYNTH"/>
    <property type="match status" value="1"/>
</dbReference>
<keyword id="KW-0012">Acyltransferase</keyword>
<keyword id="KW-0284">Flavonoid biosynthesis</keyword>
<keyword id="KW-0808">Transferase</keyword>
<protein>
    <recommendedName>
        <fullName>Chalcone synthase A</fullName>
        <ecNumber>2.3.1.74</ecNumber>
    </recommendedName>
    <alternativeName>
        <fullName>Naringenin-chalcone synthase A</fullName>
        <shortName>CHS-A</shortName>
    </alternativeName>
</protein>
<accession>P48397</accession>
<accession>O04984</accession>
<name>CHSA_IPOPU</name>
<organism>
    <name type="scientific">Ipomoea purpurea</name>
    <name type="common">Common morning glory</name>
    <name type="synonym">Pharbitis purpurea</name>
    <dbReference type="NCBI Taxonomy" id="4121"/>
    <lineage>
        <taxon>Eukaryota</taxon>
        <taxon>Viridiplantae</taxon>
        <taxon>Streptophyta</taxon>
        <taxon>Embryophyta</taxon>
        <taxon>Tracheophyta</taxon>
        <taxon>Spermatophyta</taxon>
        <taxon>Magnoliopsida</taxon>
        <taxon>eudicotyledons</taxon>
        <taxon>Gunneridae</taxon>
        <taxon>Pentapetalae</taxon>
        <taxon>asterids</taxon>
        <taxon>lamiids</taxon>
        <taxon>Solanales</taxon>
        <taxon>Convolvulaceae</taxon>
        <taxon>Ipomoeeae</taxon>
        <taxon>Ipomoea</taxon>
    </lineage>
</organism>
<reference key="1">
    <citation type="journal article" date="1995" name="Proc. Natl. Acad. Sci. U.S.A.">
        <title>Evolution of the chalcone synthase gene family in the genus Ipomoea.</title>
        <authorList>
            <person name="Durbin M.L."/>
            <person name="Learn G.H."/>
            <person name="Huttley G.A."/>
            <person name="Clegg M.T."/>
        </authorList>
    </citation>
    <scope>NUCLEOTIDE SEQUENCE [GENOMIC DNA]</scope>
</reference>
<reference key="2">
    <citation type="submission" date="1997-01" db="EMBL/GenBank/DDBJ databases">
        <title>Nucleotide polymorphism in the chalcone synthase-A locus and evolution of the chalcone synthase multigene family of common morning glory (Ipomoea purpurea).</title>
        <authorList>
            <person name="Huttley G.A."/>
            <person name="Durbin M.L."/>
            <person name="Glover D.E."/>
            <person name="Clegg M.T."/>
        </authorList>
    </citation>
    <scope>NUCLEOTIDE SEQUENCE [GENOMIC DNA]</scope>
    <source>
        <strain>IMEX16</strain>
        <strain>IMEX19</strain>
        <strain>IMEX22</strain>
        <strain>IMEX8</strain>
    </source>
</reference>
<feature type="chain" id="PRO_0000215992" description="Chalcone synthase A">
    <location>
        <begin position="1"/>
        <end position="396"/>
    </location>
</feature>
<feature type="active site" evidence="1">
    <location>
        <position position="170"/>
    </location>
</feature>
<feature type="sequence conflict" description="In Ref. 1." evidence="2" ref="1">
    <original>HRAKRL</original>
    <variation>RREKRN</variation>
    <location>
        <begin position="14"/>
        <end position="19"/>
    </location>
</feature>
<feature type="sequence conflict" description="In Ref. 1; AAB02620." evidence="2" ref="1">
    <original>D</original>
    <variation>E</variation>
    <location>
        <position position="114"/>
    </location>
</feature>
<feature type="sequence conflict" description="In Ref. 1; AAB02620." evidence="2" ref="1">
    <original>G</original>
    <variation>A</variation>
    <location>
        <position position="190"/>
    </location>
</feature>
<feature type="sequence conflict" description="In Ref. 1; AAB02620." evidence="2" ref="1">
    <original>A</original>
    <variation>S</variation>
    <location>
        <position position="225"/>
    </location>
</feature>
<feature type="sequence conflict" description="In Ref. 1; AAB02620." evidence="2" ref="1">
    <original>V</original>
    <variation>I</variation>
    <location>
        <position position="285"/>
    </location>
</feature>
<feature type="sequence conflict" description="In Ref. 1; AAB02620." evidence="2" ref="1">
    <original>DE</original>
    <variation>QQ</variation>
    <location>
        <begin position="362"/>
        <end position="363"/>
    </location>
</feature>
<proteinExistence type="inferred from homology"/>
<comment type="function">
    <text>The primary product of this enzyme is 4,2',4',6'-tetrahydroxychalcone (also termed naringenin-chalcone or chalcone) which can under specific conditions spontaneously isomerize into naringenin.</text>
</comment>
<comment type="catalytic activity">
    <reaction evidence="1">
        <text>(E)-4-coumaroyl-CoA + 3 malonyl-CoA + 3 H(+) = 2',4,4',6'-tetrahydroxychalcone + 3 CO2 + 4 CoA</text>
        <dbReference type="Rhea" id="RHEA:11128"/>
        <dbReference type="ChEBI" id="CHEBI:15378"/>
        <dbReference type="ChEBI" id="CHEBI:15413"/>
        <dbReference type="ChEBI" id="CHEBI:16526"/>
        <dbReference type="ChEBI" id="CHEBI:57287"/>
        <dbReference type="ChEBI" id="CHEBI:57384"/>
        <dbReference type="ChEBI" id="CHEBI:85008"/>
        <dbReference type="EC" id="2.3.1.74"/>
    </reaction>
</comment>
<comment type="pathway">
    <text>Secondary metabolite biosynthesis; flavonoid biosynthesis.</text>
</comment>
<comment type="similarity">
    <text evidence="2">Belongs to the thiolase-like superfamily. Chalcone/stilbene synthases family.</text>
</comment>
<sequence length="396" mass="43805">MSTTVTVLTDTWSHRAKRLEGDAKILAIGTATPANWVDQTTYPDFYFRITNSEHLLEHKEKFRRICNKSKIMKRHLVITEELLKKNPNLCTYNEASLNTRQDILVSEVPKLGKDAAMKAIKEWGRPISEITHLVFCTTSGVDMPGADFQLTKLLGLNSSVKRLMMYQQGCNAGAAMLRLAKDLAENNKGGRVLVVCSEVMLSVFRGPSLQQEDNLLAQCLFGDGAAAVIVGTEPRPGLETPLFELVSAAQTTIPDTDSYLKLQLREMGLTFHCSKAVPSLITQNVEDCLVKAFEPFGISDWNSIFWILHPGGNAILDGVEEKLGLEPEKLRASRDVLSQYGNLTSACVLFILDEVRKKSKKDEQMTTGEGLEWGVVFGFGPGLTIDTVVIRSVPIN</sequence>
<evidence type="ECO:0000255" key="1">
    <source>
        <dbReference type="PROSITE-ProRule" id="PRU10023"/>
    </source>
</evidence>
<evidence type="ECO:0000305" key="2"/>
<gene>
    <name type="primary">CHSA</name>
</gene>